<gene>
    <name evidence="1" type="primary">miaB</name>
    <name type="ordered locus">SeAg_B0715</name>
</gene>
<evidence type="ECO:0000255" key="1">
    <source>
        <dbReference type="HAMAP-Rule" id="MF_01864"/>
    </source>
</evidence>
<evidence type="ECO:0000255" key="2">
    <source>
        <dbReference type="PROSITE-ProRule" id="PRU01266"/>
    </source>
</evidence>
<keyword id="KW-0004">4Fe-4S</keyword>
<keyword id="KW-0963">Cytoplasm</keyword>
<keyword id="KW-0408">Iron</keyword>
<keyword id="KW-0411">Iron-sulfur</keyword>
<keyword id="KW-0479">Metal-binding</keyword>
<keyword id="KW-0949">S-adenosyl-L-methionine</keyword>
<keyword id="KW-0808">Transferase</keyword>
<keyword id="KW-0819">tRNA processing</keyword>
<reference key="1">
    <citation type="journal article" date="2011" name="J. Bacteriol.">
        <title>Comparative genomics of 28 Salmonella enterica isolates: evidence for CRISPR-mediated adaptive sublineage evolution.</title>
        <authorList>
            <person name="Fricke W.F."/>
            <person name="Mammel M.K."/>
            <person name="McDermott P.F."/>
            <person name="Tartera C."/>
            <person name="White D.G."/>
            <person name="Leclerc J.E."/>
            <person name="Ravel J."/>
            <person name="Cebula T.A."/>
        </authorList>
    </citation>
    <scope>NUCLEOTIDE SEQUENCE [LARGE SCALE GENOMIC DNA]</scope>
    <source>
        <strain>SL483</strain>
    </source>
</reference>
<protein>
    <recommendedName>
        <fullName evidence="1">tRNA-2-methylthio-N(6)-dimethylallyladenosine synthase</fullName>
        <ecNumber evidence="1">2.8.4.3</ecNumber>
    </recommendedName>
    <alternativeName>
        <fullName evidence="1">(Dimethylallyl)adenosine tRNA methylthiotransferase MiaB</fullName>
    </alternativeName>
    <alternativeName>
        <fullName evidence="1">tRNA-i(6)A37 methylthiotransferase</fullName>
    </alternativeName>
</protein>
<organism>
    <name type="scientific">Salmonella agona (strain SL483)</name>
    <dbReference type="NCBI Taxonomy" id="454166"/>
    <lineage>
        <taxon>Bacteria</taxon>
        <taxon>Pseudomonadati</taxon>
        <taxon>Pseudomonadota</taxon>
        <taxon>Gammaproteobacteria</taxon>
        <taxon>Enterobacterales</taxon>
        <taxon>Enterobacteriaceae</taxon>
        <taxon>Salmonella</taxon>
    </lineage>
</organism>
<proteinExistence type="inferred from homology"/>
<comment type="function">
    <text evidence="1">Catalyzes the methylthiolation of N6-(dimethylallyl)adenosine (i(6)A), leading to the formation of 2-methylthio-N6-(dimethylallyl)adenosine (ms(2)i(6)A) at position 37 in tRNAs that read codons beginning with uridine.</text>
</comment>
<comment type="catalytic activity">
    <reaction evidence="1">
        <text>N(6)-dimethylallyladenosine(37) in tRNA + (sulfur carrier)-SH + AH2 + 2 S-adenosyl-L-methionine = 2-methylsulfanyl-N(6)-dimethylallyladenosine(37) in tRNA + (sulfur carrier)-H + 5'-deoxyadenosine + L-methionine + A + S-adenosyl-L-homocysteine + 2 H(+)</text>
        <dbReference type="Rhea" id="RHEA:37067"/>
        <dbReference type="Rhea" id="RHEA-COMP:10375"/>
        <dbReference type="Rhea" id="RHEA-COMP:10376"/>
        <dbReference type="Rhea" id="RHEA-COMP:14737"/>
        <dbReference type="Rhea" id="RHEA-COMP:14739"/>
        <dbReference type="ChEBI" id="CHEBI:13193"/>
        <dbReference type="ChEBI" id="CHEBI:15378"/>
        <dbReference type="ChEBI" id="CHEBI:17319"/>
        <dbReference type="ChEBI" id="CHEBI:17499"/>
        <dbReference type="ChEBI" id="CHEBI:29917"/>
        <dbReference type="ChEBI" id="CHEBI:57844"/>
        <dbReference type="ChEBI" id="CHEBI:57856"/>
        <dbReference type="ChEBI" id="CHEBI:59789"/>
        <dbReference type="ChEBI" id="CHEBI:64428"/>
        <dbReference type="ChEBI" id="CHEBI:74415"/>
        <dbReference type="ChEBI" id="CHEBI:74417"/>
        <dbReference type="EC" id="2.8.4.3"/>
    </reaction>
</comment>
<comment type="cofactor">
    <cofactor evidence="1">
        <name>[4Fe-4S] cluster</name>
        <dbReference type="ChEBI" id="CHEBI:49883"/>
    </cofactor>
    <text evidence="1">Binds 2 [4Fe-4S] clusters. One cluster is coordinated with 3 cysteines and an exchangeable S-adenosyl-L-methionine.</text>
</comment>
<comment type="subunit">
    <text evidence="1">Monomer.</text>
</comment>
<comment type="subcellular location">
    <subcellularLocation>
        <location evidence="1">Cytoplasm</location>
    </subcellularLocation>
</comment>
<comment type="similarity">
    <text evidence="1">Belongs to the methylthiotransferase family. MiaB subfamily.</text>
</comment>
<feature type="chain" id="PRO_0000374519" description="tRNA-2-methylthio-N(6)-dimethylallyladenosine synthase">
    <location>
        <begin position="1"/>
        <end position="474"/>
    </location>
</feature>
<feature type="domain" description="MTTase N-terminal" evidence="1">
    <location>
        <begin position="3"/>
        <end position="120"/>
    </location>
</feature>
<feature type="domain" description="Radical SAM core" evidence="2">
    <location>
        <begin position="143"/>
        <end position="375"/>
    </location>
</feature>
<feature type="domain" description="TRAM" evidence="1">
    <location>
        <begin position="378"/>
        <end position="441"/>
    </location>
</feature>
<feature type="binding site" evidence="1">
    <location>
        <position position="12"/>
    </location>
    <ligand>
        <name>[4Fe-4S] cluster</name>
        <dbReference type="ChEBI" id="CHEBI:49883"/>
        <label>1</label>
    </ligand>
</feature>
<feature type="binding site" evidence="1">
    <location>
        <position position="49"/>
    </location>
    <ligand>
        <name>[4Fe-4S] cluster</name>
        <dbReference type="ChEBI" id="CHEBI:49883"/>
        <label>1</label>
    </ligand>
</feature>
<feature type="binding site" evidence="1">
    <location>
        <position position="83"/>
    </location>
    <ligand>
        <name>[4Fe-4S] cluster</name>
        <dbReference type="ChEBI" id="CHEBI:49883"/>
        <label>1</label>
    </ligand>
</feature>
<feature type="binding site" evidence="1">
    <location>
        <position position="157"/>
    </location>
    <ligand>
        <name>[4Fe-4S] cluster</name>
        <dbReference type="ChEBI" id="CHEBI:49883"/>
        <label>2</label>
        <note>4Fe-4S-S-AdoMet</note>
    </ligand>
</feature>
<feature type="binding site" evidence="1">
    <location>
        <position position="161"/>
    </location>
    <ligand>
        <name>[4Fe-4S] cluster</name>
        <dbReference type="ChEBI" id="CHEBI:49883"/>
        <label>2</label>
        <note>4Fe-4S-S-AdoMet</note>
    </ligand>
</feature>
<feature type="binding site" evidence="1">
    <location>
        <position position="164"/>
    </location>
    <ligand>
        <name>[4Fe-4S] cluster</name>
        <dbReference type="ChEBI" id="CHEBI:49883"/>
        <label>2</label>
        <note>4Fe-4S-S-AdoMet</note>
    </ligand>
</feature>
<name>MIAB_SALA4</name>
<sequence length="474" mass="53716">MTKKLHIKTWGCQMNEYDSSKMADLLDATHGYQLTDVAEEADVLLLNTCSIREKAQEKVFHQLGRWRLLKEKNPDLIIGVGGCVASQEGEHIRQRAHYVDIIFGPQTLHRLPEMINSVRGDRSPVVDISFPEIEKFDRLPEPRAEGPTAFVSIMEGCNKYCTYCVVPYTRGEEVSRPSDDILFEIAQLAAQGVREVNLLGQNVNAWRGENYDGTTGTFADLLRLVAAIDGIDRIRFTTSHPIEFTDDIIEVYRDTPELVSFLHLPVQSGSDRVLNLMGRTHTALEYKAIIRKLRAARPDIQISSDFIVGFPGETTDDFEKTMKLIADVNFDMSYSFIFSARPGTPAADMVDDVPEEEKKQRLYILQERINQQAMAWSRRMLGTTQRILVEGTSRKNIMELSGRTENNRVVNFEGTPEMIGKFVDVEITDVYPNSLRGKVVRTEDEMGLRVAETPESVIARTRKENELGVGFYQP</sequence>
<dbReference type="EC" id="2.8.4.3" evidence="1"/>
<dbReference type="EMBL" id="CP001138">
    <property type="protein sequence ID" value="ACH49440.1"/>
    <property type="molecule type" value="Genomic_DNA"/>
</dbReference>
<dbReference type="RefSeq" id="WP_001519200.1">
    <property type="nucleotide sequence ID" value="NC_011149.1"/>
</dbReference>
<dbReference type="SMR" id="B5EZB2"/>
<dbReference type="KEGG" id="sea:SeAg_B0715"/>
<dbReference type="HOGENOM" id="CLU_018697_2_0_6"/>
<dbReference type="Proteomes" id="UP000008819">
    <property type="component" value="Chromosome"/>
</dbReference>
<dbReference type="GO" id="GO:0005829">
    <property type="term" value="C:cytosol"/>
    <property type="evidence" value="ECO:0007669"/>
    <property type="project" value="TreeGrafter"/>
</dbReference>
<dbReference type="GO" id="GO:0051539">
    <property type="term" value="F:4 iron, 4 sulfur cluster binding"/>
    <property type="evidence" value="ECO:0007669"/>
    <property type="project" value="UniProtKB-UniRule"/>
</dbReference>
<dbReference type="GO" id="GO:0046872">
    <property type="term" value="F:metal ion binding"/>
    <property type="evidence" value="ECO:0007669"/>
    <property type="project" value="UniProtKB-KW"/>
</dbReference>
<dbReference type="GO" id="GO:0035597">
    <property type="term" value="F:N6-isopentenyladenosine methylthiotransferase activity"/>
    <property type="evidence" value="ECO:0007669"/>
    <property type="project" value="TreeGrafter"/>
</dbReference>
<dbReference type="CDD" id="cd01335">
    <property type="entry name" value="Radical_SAM"/>
    <property type="match status" value="1"/>
</dbReference>
<dbReference type="FunFam" id="3.40.50.12160:FF:000001">
    <property type="entry name" value="tRNA-2-methylthio-N(6)-dimethylallyladenosine synthase"/>
    <property type="match status" value="1"/>
</dbReference>
<dbReference type="FunFam" id="3.80.30.20:FF:000001">
    <property type="entry name" value="tRNA-2-methylthio-N(6)-dimethylallyladenosine synthase 2"/>
    <property type="match status" value="1"/>
</dbReference>
<dbReference type="Gene3D" id="3.40.50.12160">
    <property type="entry name" value="Methylthiotransferase, N-terminal domain"/>
    <property type="match status" value="1"/>
</dbReference>
<dbReference type="Gene3D" id="3.80.30.20">
    <property type="entry name" value="tm_1862 like domain"/>
    <property type="match status" value="1"/>
</dbReference>
<dbReference type="HAMAP" id="MF_01864">
    <property type="entry name" value="tRNA_metthiotr_MiaB"/>
    <property type="match status" value="1"/>
</dbReference>
<dbReference type="InterPro" id="IPR006638">
    <property type="entry name" value="Elp3/MiaA/NifB-like_rSAM"/>
</dbReference>
<dbReference type="InterPro" id="IPR005839">
    <property type="entry name" value="Methylthiotransferase"/>
</dbReference>
<dbReference type="InterPro" id="IPR020612">
    <property type="entry name" value="Methylthiotransferase_CS"/>
</dbReference>
<dbReference type="InterPro" id="IPR013848">
    <property type="entry name" value="Methylthiotransferase_N"/>
</dbReference>
<dbReference type="InterPro" id="IPR038135">
    <property type="entry name" value="Methylthiotransferase_N_sf"/>
</dbReference>
<dbReference type="InterPro" id="IPR006463">
    <property type="entry name" value="MiaB_methiolase"/>
</dbReference>
<dbReference type="InterPro" id="IPR007197">
    <property type="entry name" value="rSAM"/>
</dbReference>
<dbReference type="InterPro" id="IPR023404">
    <property type="entry name" value="rSAM_horseshoe"/>
</dbReference>
<dbReference type="InterPro" id="IPR002792">
    <property type="entry name" value="TRAM_dom"/>
</dbReference>
<dbReference type="NCBIfam" id="TIGR01574">
    <property type="entry name" value="miaB-methiolase"/>
    <property type="match status" value="1"/>
</dbReference>
<dbReference type="NCBIfam" id="TIGR00089">
    <property type="entry name" value="MiaB/RimO family radical SAM methylthiotransferase"/>
    <property type="match status" value="1"/>
</dbReference>
<dbReference type="PANTHER" id="PTHR43020">
    <property type="entry name" value="CDK5 REGULATORY SUBUNIT-ASSOCIATED PROTEIN 1"/>
    <property type="match status" value="1"/>
</dbReference>
<dbReference type="PANTHER" id="PTHR43020:SF2">
    <property type="entry name" value="MITOCHONDRIAL TRNA METHYLTHIOTRANSFERASE CDK5RAP1"/>
    <property type="match status" value="1"/>
</dbReference>
<dbReference type="Pfam" id="PF04055">
    <property type="entry name" value="Radical_SAM"/>
    <property type="match status" value="1"/>
</dbReference>
<dbReference type="Pfam" id="PF01938">
    <property type="entry name" value="TRAM"/>
    <property type="match status" value="1"/>
</dbReference>
<dbReference type="Pfam" id="PF00919">
    <property type="entry name" value="UPF0004"/>
    <property type="match status" value="1"/>
</dbReference>
<dbReference type="SFLD" id="SFLDF00273">
    <property type="entry name" value="(dimethylallyl)adenosine_tRNA"/>
    <property type="match status" value="1"/>
</dbReference>
<dbReference type="SFLD" id="SFLDG01082">
    <property type="entry name" value="B12-binding_domain_containing"/>
    <property type="match status" value="1"/>
</dbReference>
<dbReference type="SFLD" id="SFLDS00029">
    <property type="entry name" value="Radical_SAM"/>
    <property type="match status" value="1"/>
</dbReference>
<dbReference type="SMART" id="SM00729">
    <property type="entry name" value="Elp3"/>
    <property type="match status" value="1"/>
</dbReference>
<dbReference type="SUPFAM" id="SSF102114">
    <property type="entry name" value="Radical SAM enzymes"/>
    <property type="match status" value="1"/>
</dbReference>
<dbReference type="PROSITE" id="PS51449">
    <property type="entry name" value="MTTASE_N"/>
    <property type="match status" value="1"/>
</dbReference>
<dbReference type="PROSITE" id="PS01278">
    <property type="entry name" value="MTTASE_RADICAL"/>
    <property type="match status" value="1"/>
</dbReference>
<dbReference type="PROSITE" id="PS51918">
    <property type="entry name" value="RADICAL_SAM"/>
    <property type="match status" value="1"/>
</dbReference>
<dbReference type="PROSITE" id="PS50926">
    <property type="entry name" value="TRAM"/>
    <property type="match status" value="1"/>
</dbReference>
<accession>B5EZB2</accession>